<protein>
    <recommendedName>
        <fullName evidence="1">Large ribosomal subunit protein bL31</fullName>
    </recommendedName>
    <alternativeName>
        <fullName evidence="2">50S ribosomal protein L31</fullName>
    </alternativeName>
</protein>
<organism>
    <name type="scientific">Pseudomonas aeruginosa (strain ATCC 15692 / DSM 22644 / CIP 104116 / JCM 14847 / LMG 12228 / 1C / PRS 101 / PAO1)</name>
    <dbReference type="NCBI Taxonomy" id="208964"/>
    <lineage>
        <taxon>Bacteria</taxon>
        <taxon>Pseudomonadati</taxon>
        <taxon>Pseudomonadota</taxon>
        <taxon>Gammaproteobacteria</taxon>
        <taxon>Pseudomonadales</taxon>
        <taxon>Pseudomonadaceae</taxon>
        <taxon>Pseudomonas</taxon>
    </lineage>
</organism>
<reference key="1">
    <citation type="journal article" date="2000" name="Nature">
        <title>Complete genome sequence of Pseudomonas aeruginosa PAO1, an opportunistic pathogen.</title>
        <authorList>
            <person name="Stover C.K."/>
            <person name="Pham X.-Q.T."/>
            <person name="Erwin A.L."/>
            <person name="Mizoguchi S.D."/>
            <person name="Warrener P."/>
            <person name="Hickey M.J."/>
            <person name="Brinkman F.S.L."/>
            <person name="Hufnagle W.O."/>
            <person name="Kowalik D.J."/>
            <person name="Lagrou M."/>
            <person name="Garber R.L."/>
            <person name="Goltry L."/>
            <person name="Tolentino E."/>
            <person name="Westbrock-Wadman S."/>
            <person name="Yuan Y."/>
            <person name="Brody L.L."/>
            <person name="Coulter S.N."/>
            <person name="Folger K.R."/>
            <person name="Kas A."/>
            <person name="Larbig K."/>
            <person name="Lim R.M."/>
            <person name="Smith K.A."/>
            <person name="Spencer D.H."/>
            <person name="Wong G.K.-S."/>
            <person name="Wu Z."/>
            <person name="Paulsen I.T."/>
            <person name="Reizer J."/>
            <person name="Saier M.H. Jr."/>
            <person name="Hancock R.E.W."/>
            <person name="Lory S."/>
            <person name="Olson M.V."/>
        </authorList>
    </citation>
    <scope>NUCLEOTIDE SEQUENCE [LARGE SCALE GENOMIC DNA]</scope>
    <source>
        <strain>ATCC 15692 / DSM 22644 / CIP 104116 / JCM 14847 / LMG 12228 / 1C / PRS 101 / PAO1</strain>
    </source>
</reference>
<reference key="2">
    <citation type="journal article" date="1995" name="Int. J. Syst. Bacteriol.">
        <title>Comparative ribosomal protein sequence analyses of a phylogenetically defined genus, Pseudomonas, and its relatives.</title>
        <authorList>
            <person name="Ochi K."/>
        </authorList>
    </citation>
    <scope>PROTEIN SEQUENCE OF 1-17</scope>
    <source>
        <strain>ATCC 10145 / DSM 50071 / JCM 5962 / LMG 1242 / NBRC 12689 / NCIMB 8295 / NRRL B-771</strain>
    </source>
</reference>
<dbReference type="EMBL" id="AE004091">
    <property type="protein sequence ID" value="AAG08434.1"/>
    <property type="molecule type" value="Genomic_DNA"/>
</dbReference>
<dbReference type="PIR" id="H83014">
    <property type="entry name" value="H83014"/>
</dbReference>
<dbReference type="RefSeq" id="NP_253736.1">
    <property type="nucleotide sequence ID" value="NC_002516.2"/>
</dbReference>
<dbReference type="RefSeq" id="WP_003095846.1">
    <property type="nucleotide sequence ID" value="NZ_QZGE01000002.1"/>
</dbReference>
<dbReference type="PDB" id="7UNR">
    <property type="method" value="EM"/>
    <property type="resolution" value="2.90 A"/>
    <property type="chains" value="3=1-71"/>
</dbReference>
<dbReference type="PDB" id="7UNU">
    <property type="method" value="EM"/>
    <property type="resolution" value="2.90 A"/>
    <property type="chains" value="3=1-71"/>
</dbReference>
<dbReference type="PDB" id="7UNV">
    <property type="method" value="EM"/>
    <property type="resolution" value="2.70 A"/>
    <property type="chains" value="3=1-71"/>
</dbReference>
<dbReference type="PDB" id="7UNW">
    <property type="method" value="EM"/>
    <property type="resolution" value="2.60 A"/>
    <property type="chains" value="3=1-71"/>
</dbReference>
<dbReference type="PDB" id="8CD1">
    <property type="method" value="EM"/>
    <property type="resolution" value="3.00 A"/>
    <property type="chains" value="Le=1-71"/>
</dbReference>
<dbReference type="PDBsum" id="7UNR"/>
<dbReference type="PDBsum" id="7UNU"/>
<dbReference type="PDBsum" id="7UNV"/>
<dbReference type="PDBsum" id="7UNW"/>
<dbReference type="PDBsum" id="8CD1"/>
<dbReference type="EMDB" id="EMD-16566"/>
<dbReference type="EMDB" id="EMD-26630"/>
<dbReference type="EMDB" id="EMD-26633"/>
<dbReference type="EMDB" id="EMD-26634"/>
<dbReference type="EMDB" id="EMD-26635"/>
<dbReference type="SMR" id="Q9HUD0"/>
<dbReference type="FunCoup" id="Q9HUD0">
    <property type="interactions" value="522"/>
</dbReference>
<dbReference type="STRING" id="208964.PA5049"/>
<dbReference type="PaxDb" id="208964-PA5049"/>
<dbReference type="DNASU" id="881149"/>
<dbReference type="GeneID" id="881149"/>
<dbReference type="KEGG" id="pae:PA5049"/>
<dbReference type="PATRIC" id="fig|208964.12.peg.5293"/>
<dbReference type="PseudoCAP" id="PA5049"/>
<dbReference type="HOGENOM" id="CLU_114306_4_3_6"/>
<dbReference type="InParanoid" id="Q9HUD0"/>
<dbReference type="OrthoDB" id="9803251at2"/>
<dbReference type="PhylomeDB" id="Q9HUD0"/>
<dbReference type="BioCyc" id="PAER208964:G1FZ6-5165-MONOMER"/>
<dbReference type="PRO" id="PR:Q9HUD0"/>
<dbReference type="Proteomes" id="UP000002438">
    <property type="component" value="Chromosome"/>
</dbReference>
<dbReference type="GO" id="GO:1990904">
    <property type="term" value="C:ribonucleoprotein complex"/>
    <property type="evidence" value="ECO:0007669"/>
    <property type="project" value="UniProtKB-KW"/>
</dbReference>
<dbReference type="GO" id="GO:0005840">
    <property type="term" value="C:ribosome"/>
    <property type="evidence" value="ECO:0007669"/>
    <property type="project" value="UniProtKB-KW"/>
</dbReference>
<dbReference type="GO" id="GO:0046872">
    <property type="term" value="F:metal ion binding"/>
    <property type="evidence" value="ECO:0007669"/>
    <property type="project" value="UniProtKB-KW"/>
</dbReference>
<dbReference type="GO" id="GO:0019843">
    <property type="term" value="F:rRNA binding"/>
    <property type="evidence" value="ECO:0007669"/>
    <property type="project" value="UniProtKB-KW"/>
</dbReference>
<dbReference type="GO" id="GO:0003735">
    <property type="term" value="F:structural constituent of ribosome"/>
    <property type="evidence" value="ECO:0007669"/>
    <property type="project" value="InterPro"/>
</dbReference>
<dbReference type="GO" id="GO:0006412">
    <property type="term" value="P:translation"/>
    <property type="evidence" value="ECO:0007669"/>
    <property type="project" value="UniProtKB-UniRule"/>
</dbReference>
<dbReference type="Gene3D" id="4.10.830.30">
    <property type="entry name" value="Ribosomal protein L31"/>
    <property type="match status" value="1"/>
</dbReference>
<dbReference type="HAMAP" id="MF_00501">
    <property type="entry name" value="Ribosomal_bL31_1"/>
    <property type="match status" value="1"/>
</dbReference>
<dbReference type="InterPro" id="IPR034704">
    <property type="entry name" value="Ribosomal_bL28/bL31-like_sf"/>
</dbReference>
<dbReference type="InterPro" id="IPR002150">
    <property type="entry name" value="Ribosomal_bL31"/>
</dbReference>
<dbReference type="InterPro" id="IPR027491">
    <property type="entry name" value="Ribosomal_bL31_A"/>
</dbReference>
<dbReference type="InterPro" id="IPR042105">
    <property type="entry name" value="Ribosomal_bL31_sf"/>
</dbReference>
<dbReference type="NCBIfam" id="TIGR00105">
    <property type="entry name" value="L31"/>
    <property type="match status" value="1"/>
</dbReference>
<dbReference type="NCBIfam" id="NF000612">
    <property type="entry name" value="PRK00019.1"/>
    <property type="match status" value="1"/>
</dbReference>
<dbReference type="NCBIfam" id="NF001809">
    <property type="entry name" value="PRK00528.1"/>
    <property type="match status" value="1"/>
</dbReference>
<dbReference type="PANTHER" id="PTHR33280">
    <property type="entry name" value="50S RIBOSOMAL PROTEIN L31, CHLOROPLASTIC"/>
    <property type="match status" value="1"/>
</dbReference>
<dbReference type="PANTHER" id="PTHR33280:SF6">
    <property type="entry name" value="LARGE RIBOSOMAL SUBUNIT PROTEIN BL31A"/>
    <property type="match status" value="1"/>
</dbReference>
<dbReference type="Pfam" id="PF01197">
    <property type="entry name" value="Ribosomal_L31"/>
    <property type="match status" value="1"/>
</dbReference>
<dbReference type="PRINTS" id="PR01249">
    <property type="entry name" value="RIBOSOMALL31"/>
</dbReference>
<dbReference type="SUPFAM" id="SSF143800">
    <property type="entry name" value="L28p-like"/>
    <property type="match status" value="1"/>
</dbReference>
<dbReference type="PROSITE" id="PS01143">
    <property type="entry name" value="RIBOSOMAL_L31"/>
    <property type="match status" value="1"/>
</dbReference>
<name>RL31_PSEAE</name>
<comment type="function">
    <text evidence="1">Binds the 23S rRNA.</text>
</comment>
<comment type="cofactor">
    <cofactor evidence="1">
        <name>Zn(2+)</name>
        <dbReference type="ChEBI" id="CHEBI:29105"/>
    </cofactor>
    <text evidence="1">Binds 1 zinc ion per subunit.</text>
</comment>
<comment type="subunit">
    <text evidence="1">Part of the 50S ribosomal subunit.</text>
</comment>
<comment type="similarity">
    <text evidence="1">Belongs to the bacterial ribosomal protein bL31 family. Type A subfamily.</text>
</comment>
<sequence length="71" mass="7920">MKADIHPTYEAIEATCSCGNVIKTRSTLCKPIHLDVCSECHPFYTGKQKVLDTGGRIDRFKQRFGVFGATK</sequence>
<proteinExistence type="evidence at protein level"/>
<feature type="chain" id="PRO_0000173147" description="Large ribosomal subunit protein bL31">
    <location>
        <begin position="1"/>
        <end position="71"/>
    </location>
</feature>
<feature type="binding site" evidence="1">
    <location>
        <position position="16"/>
    </location>
    <ligand>
        <name>Zn(2+)</name>
        <dbReference type="ChEBI" id="CHEBI:29105"/>
    </ligand>
</feature>
<feature type="binding site" evidence="1">
    <location>
        <position position="18"/>
    </location>
    <ligand>
        <name>Zn(2+)</name>
        <dbReference type="ChEBI" id="CHEBI:29105"/>
    </ligand>
</feature>
<feature type="binding site" evidence="1">
    <location>
        <position position="37"/>
    </location>
    <ligand>
        <name>Zn(2+)</name>
        <dbReference type="ChEBI" id="CHEBI:29105"/>
    </ligand>
</feature>
<feature type="binding site" evidence="1">
    <location>
        <position position="40"/>
    </location>
    <ligand>
        <name>Zn(2+)</name>
        <dbReference type="ChEBI" id="CHEBI:29105"/>
    </ligand>
</feature>
<accession>Q9HUD0</accession>
<accession>Q9R4P9</accession>
<keyword id="KW-0002">3D-structure</keyword>
<keyword id="KW-0903">Direct protein sequencing</keyword>
<keyword id="KW-0479">Metal-binding</keyword>
<keyword id="KW-1185">Reference proteome</keyword>
<keyword id="KW-0687">Ribonucleoprotein</keyword>
<keyword id="KW-0689">Ribosomal protein</keyword>
<keyword id="KW-0694">RNA-binding</keyword>
<keyword id="KW-0699">rRNA-binding</keyword>
<keyword id="KW-0862">Zinc</keyword>
<evidence type="ECO:0000255" key="1">
    <source>
        <dbReference type="HAMAP-Rule" id="MF_00501"/>
    </source>
</evidence>
<evidence type="ECO:0000305" key="2"/>
<gene>
    <name evidence="1" type="primary">rpmE</name>
    <name type="ordered locus">PA5049</name>
</gene>